<accession>Q07E38</accession>
<protein>
    <recommendedName>
        <fullName>Caveolin-1</fullName>
    </recommendedName>
</protein>
<dbReference type="EMBL" id="DP000182">
    <property type="protein sequence ID" value="ABI93638.1"/>
    <property type="molecule type" value="Genomic_DNA"/>
</dbReference>
<dbReference type="RefSeq" id="XP_058580499.1">
    <property type="nucleotide sequence ID" value="XM_058724516.1"/>
</dbReference>
<dbReference type="SMR" id="Q07E38"/>
<dbReference type="GeneID" id="131509096"/>
<dbReference type="GO" id="GO:0005901">
    <property type="term" value="C:caveola"/>
    <property type="evidence" value="ECO:0000250"/>
    <property type="project" value="UniProtKB"/>
</dbReference>
<dbReference type="GO" id="GO:0005768">
    <property type="term" value="C:endosome"/>
    <property type="evidence" value="ECO:0000250"/>
    <property type="project" value="UniProtKB"/>
</dbReference>
<dbReference type="GO" id="GO:0005925">
    <property type="term" value="C:focal adhesion"/>
    <property type="evidence" value="ECO:0007669"/>
    <property type="project" value="TreeGrafter"/>
</dbReference>
<dbReference type="GO" id="GO:0000139">
    <property type="term" value="C:Golgi membrane"/>
    <property type="evidence" value="ECO:0007669"/>
    <property type="project" value="UniProtKB-SubCell"/>
</dbReference>
<dbReference type="GO" id="GO:0045121">
    <property type="term" value="C:membrane raft"/>
    <property type="evidence" value="ECO:0000250"/>
    <property type="project" value="UniProtKB"/>
</dbReference>
<dbReference type="GO" id="GO:0048471">
    <property type="term" value="C:perinuclear region of cytoplasm"/>
    <property type="evidence" value="ECO:0007669"/>
    <property type="project" value="TreeGrafter"/>
</dbReference>
<dbReference type="GO" id="GO:0042383">
    <property type="term" value="C:sarcolemma"/>
    <property type="evidence" value="ECO:0007669"/>
    <property type="project" value="TreeGrafter"/>
</dbReference>
<dbReference type="GO" id="GO:0060090">
    <property type="term" value="F:molecular adaptor activity"/>
    <property type="evidence" value="ECO:0007669"/>
    <property type="project" value="TreeGrafter"/>
</dbReference>
<dbReference type="GO" id="GO:0008142">
    <property type="term" value="F:oxysterol binding"/>
    <property type="evidence" value="ECO:0000250"/>
    <property type="project" value="UniProtKB"/>
</dbReference>
<dbReference type="GO" id="GO:0019901">
    <property type="term" value="F:protein kinase binding"/>
    <property type="evidence" value="ECO:0007669"/>
    <property type="project" value="TreeGrafter"/>
</dbReference>
<dbReference type="GO" id="GO:0044325">
    <property type="term" value="F:transmembrane transporter binding"/>
    <property type="evidence" value="ECO:0007669"/>
    <property type="project" value="TreeGrafter"/>
</dbReference>
<dbReference type="GO" id="GO:0070836">
    <property type="term" value="P:caveola assembly"/>
    <property type="evidence" value="ECO:0007669"/>
    <property type="project" value="InterPro"/>
</dbReference>
<dbReference type="GO" id="GO:0030154">
    <property type="term" value="P:cell differentiation"/>
    <property type="evidence" value="ECO:0007669"/>
    <property type="project" value="TreeGrafter"/>
</dbReference>
<dbReference type="GO" id="GO:0001937">
    <property type="term" value="P:negative regulation of endothelial cell proliferation"/>
    <property type="evidence" value="ECO:0007669"/>
    <property type="project" value="TreeGrafter"/>
</dbReference>
<dbReference type="GO" id="GO:0031623">
    <property type="term" value="P:receptor internalization"/>
    <property type="evidence" value="ECO:0000250"/>
    <property type="project" value="UniProtKB"/>
</dbReference>
<dbReference type="GO" id="GO:0051480">
    <property type="term" value="P:regulation of cytosolic calcium ion concentration"/>
    <property type="evidence" value="ECO:0007669"/>
    <property type="project" value="TreeGrafter"/>
</dbReference>
<dbReference type="GO" id="GO:0031295">
    <property type="term" value="P:T cell costimulation"/>
    <property type="evidence" value="ECO:0000250"/>
    <property type="project" value="UniProtKB"/>
</dbReference>
<dbReference type="InterPro" id="IPR001612">
    <property type="entry name" value="Caveolin"/>
</dbReference>
<dbReference type="InterPro" id="IPR018361">
    <property type="entry name" value="Caveolin_CS"/>
</dbReference>
<dbReference type="PANTHER" id="PTHR10844">
    <property type="entry name" value="CAVEOLIN"/>
    <property type="match status" value="1"/>
</dbReference>
<dbReference type="PANTHER" id="PTHR10844:SF18">
    <property type="entry name" value="CAVEOLIN-1"/>
    <property type="match status" value="1"/>
</dbReference>
<dbReference type="Pfam" id="PF01146">
    <property type="entry name" value="Caveolin"/>
    <property type="match status" value="1"/>
</dbReference>
<dbReference type="PROSITE" id="PS01210">
    <property type="entry name" value="CAVEOLIN"/>
    <property type="match status" value="1"/>
</dbReference>
<feature type="initiator methionine" description="Removed" evidence="4">
    <location>
        <position position="1"/>
    </location>
</feature>
<feature type="chain" id="PRO_0000260371" description="Caveolin-1">
    <location>
        <begin position="2"/>
        <end position="178"/>
    </location>
</feature>
<feature type="topological domain" description="Cytoplasmic" evidence="6">
    <location>
        <begin position="2"/>
        <end position="104"/>
    </location>
</feature>
<feature type="intramembrane region" description="Helical" evidence="6">
    <location>
        <begin position="105"/>
        <end position="125"/>
    </location>
</feature>
<feature type="topological domain" description="Cytoplasmic" evidence="6">
    <location>
        <begin position="126"/>
        <end position="178"/>
    </location>
</feature>
<feature type="region of interest" description="Required for homooligomerization" evidence="4">
    <location>
        <begin position="2"/>
        <end position="94"/>
    </location>
</feature>
<feature type="region of interest" description="Interaction with CAVIN3" evidence="4">
    <location>
        <begin position="82"/>
        <end position="94"/>
    </location>
</feature>
<feature type="region of interest" description="Interacts with SPRY1, SPRY2, SPRY3 and SPRY4" evidence="3">
    <location>
        <begin position="131"/>
        <end position="142"/>
    </location>
</feature>
<feature type="region of interest" description="Interacts with SPRY1, SPRY2, and SPRY4" evidence="3">
    <location>
        <begin position="149"/>
        <end position="160"/>
    </location>
</feature>
<feature type="region of interest" description="Interacts with SPRY1, SPRY2, SPRY3 and SPRY4" evidence="3">
    <location>
        <begin position="167"/>
        <end position="178"/>
    </location>
</feature>
<feature type="modified residue" description="N-acetylserine" evidence="4">
    <location>
        <position position="2"/>
    </location>
</feature>
<feature type="modified residue" description="Phosphoserine" evidence="2">
    <location>
        <position position="2"/>
    </location>
</feature>
<feature type="modified residue" description="N6-acetyllysine; alternate" evidence="4">
    <location>
        <position position="5"/>
    </location>
</feature>
<feature type="modified residue" description="Phosphotyrosine" evidence="4">
    <location>
        <position position="6"/>
    </location>
</feature>
<feature type="modified residue" description="Phosphoserine" evidence="3">
    <location>
        <position position="9"/>
    </location>
</feature>
<feature type="modified residue" description="Phosphotyrosine; by ABL1" evidence="3">
    <location>
        <position position="14"/>
    </location>
</feature>
<feature type="modified residue" description="Phosphotyrosine" evidence="4">
    <location>
        <position position="25"/>
    </location>
</feature>
<feature type="lipid moiety-binding region" description="S-palmitoyl cysteine" evidence="1">
    <location>
        <position position="133"/>
    </location>
</feature>
<feature type="lipid moiety-binding region" description="S-palmitoyl cysteine" evidence="1">
    <location>
        <position position="143"/>
    </location>
</feature>
<feature type="lipid moiety-binding region" description="S-palmitoyl cysteine" evidence="1">
    <location>
        <position position="156"/>
    </location>
</feature>
<feature type="cross-link" description="Glycyl lysine isopeptide (Lys-Gly) (interchain with G-Cter in ubiquitin); alternate" evidence="4">
    <location>
        <position position="5"/>
    </location>
</feature>
<feature type="cross-link" description="Glycyl lysine isopeptide (Lys-Gly) (interchain with G-Cter in ubiquitin)" evidence="4">
    <location>
        <position position="26"/>
    </location>
</feature>
<feature type="cross-link" description="Glycyl lysine isopeptide (Lys-Gly) (interchain with G-Cter in ubiquitin)" evidence="4">
    <location>
        <position position="30"/>
    </location>
</feature>
<feature type="cross-link" description="Glycyl lysine isopeptide (Lys-Gly) (interchain with G-Cter in ubiquitin)" evidence="4">
    <location>
        <position position="39"/>
    </location>
</feature>
<feature type="cross-link" description="Glycyl lysine isopeptide (Lys-Gly) (interchain with G-Cter in ubiquitin)" evidence="4">
    <location>
        <position position="47"/>
    </location>
</feature>
<feature type="cross-link" description="Glycyl lysine isopeptide (Lys-Gly) (interchain with G-Cter in ubiquitin)" evidence="4">
    <location>
        <position position="57"/>
    </location>
</feature>
<comment type="function">
    <text evidence="3 4">May act as a scaffolding protein within caveolar membranes. Forms a stable heterooligomeric complex with CAV2 that targets to lipid rafts and drives caveolae formation. Mediates the recruitment of CAVIN proteins (CAVIN1/2/3/4) to the caveolae (By similarity). Interacts directly with G-protein alpha subunits and can functionally regulate their activity (By similarity). Involved in the costimulatory signal essential for T-cell receptor (TCR)-mediated T-cell activation. Its binding to DPP4 induces T-cell proliferation and NF-kappa-B activation in a T-cell receptor/CD3-dependent manner (By similarity). Recruits CTNNB1 to caveolar membranes and may regulate CTNNB1-mediated signaling through the Wnt pathway (By similarity). Negatively regulates TGFB1-mediated activation of SMAD2/3 by mediating the internalization of TGFBR1 from membrane rafts leading to its subsequent degradation (By similarity). Binds 20(S)-hydroxycholesterol (20(S)-OHC) (By similarity).</text>
</comment>
<comment type="subunit">
    <text evidence="2 3 4 5">Homooligomer. Interacts with GLIPR2. Interacts with NOSTRIN (By similarity). Interacts with SNAP25 and STX1A (By similarity). Interacts (via the N-terminus) with DPP4; the interaction is direct (By similarity). Interacts with CTNNB1, CDH1 and JUP. Interacts with PACSIN2; this interaction induces membrane tubulation (By similarity). Interacts with SLC7A9 (By similarity). Interacts with BMX and BTK. Interacts with TGFBR1. Interacts with CAVIN3 (via leucine-zipper domain) in a cholesterol-sensitive manner. Interacts with CAVIN1. Interacts with EHD2 in a cholesterol-dependent manner. Forms a ternary complex with UBXN6 and VCP; mediates CAV1 targeting to lysosomes for degradation. Interacts with ABCG1; this interaction regulates ABCG1-mediated cholesterol efflux (By similarity). Interacts with NEU3; this interaction enhances NEU3 sialidase activity within caveola. Interacts (via C-terminus) with SPRY1, SPRY2 (via C-terminus), SPRY3, and SPRY4 (By similarity). Interacts with IGFBP5; this interaction allows trafficking of IGFBP5 from the plasma membrane to the nucleus (By similarity).</text>
</comment>
<comment type="subcellular location">
    <subcellularLocation>
        <location evidence="1">Golgi apparatus membrane</location>
        <topology evidence="1">Peripheral membrane protein</topology>
    </subcellularLocation>
    <subcellularLocation>
        <location evidence="1">Cell membrane</location>
        <topology evidence="1">Peripheral membrane protein</topology>
    </subcellularLocation>
    <subcellularLocation>
        <location evidence="3">Membrane</location>
        <location evidence="3">Caveola</location>
        <topology evidence="1">Peripheral membrane protein</topology>
    </subcellularLocation>
    <subcellularLocation>
        <location evidence="4">Membrane raft</location>
    </subcellularLocation>
    <text evidence="1">Colocalized with DPP4 in membrane rafts. Potential hairpin-like structure in the membrane. Membrane protein of caveolae (By similarity).</text>
</comment>
<comment type="PTM">
    <text evidence="4">Phosphorylated at Tyr-14 by ABL1 in response to oxidative stress.</text>
</comment>
<comment type="PTM">
    <text evidence="4">Ubiquitinated. Undergo monoubiquitination and multi- and/or polyubiquitination. Monoubiquitination of N-terminal lysines promotes integration in a ternary complex with UBXN6 and VCP which promotes oligomeric CAV1 targeting to lysosomes for degradation. Ubiquitinated by ZNRF1; leading to degradation and modulation of the TLR4-mediated immune response.</text>
</comment>
<comment type="similarity">
    <text evidence="7">Belongs to the caveolin family.</text>
</comment>
<name>CAV1_NEONE</name>
<evidence type="ECO:0000250" key="1"/>
<evidence type="ECO:0000250" key="2">
    <source>
        <dbReference type="UniProtKB" id="P41350"/>
    </source>
</evidence>
<evidence type="ECO:0000250" key="3">
    <source>
        <dbReference type="UniProtKB" id="P49817"/>
    </source>
</evidence>
<evidence type="ECO:0000250" key="4">
    <source>
        <dbReference type="UniProtKB" id="Q03135"/>
    </source>
</evidence>
<evidence type="ECO:0000250" key="5">
    <source>
        <dbReference type="UniProtKB" id="Q2IBA5"/>
    </source>
</evidence>
<evidence type="ECO:0000255" key="6"/>
<evidence type="ECO:0000305" key="7"/>
<proteinExistence type="inferred from homology"/>
<gene>
    <name type="primary">CAV1</name>
</gene>
<keyword id="KW-0007">Acetylation</keyword>
<keyword id="KW-1003">Cell membrane</keyword>
<keyword id="KW-0333">Golgi apparatus</keyword>
<keyword id="KW-1017">Isopeptide bond</keyword>
<keyword id="KW-0449">Lipoprotein</keyword>
<keyword id="KW-0472">Membrane</keyword>
<keyword id="KW-0564">Palmitate</keyword>
<keyword id="KW-0597">Phosphoprotein</keyword>
<keyword id="KW-0832">Ubl conjugation</keyword>
<reference key="1">
    <citation type="submission" date="2006-09" db="EMBL/GenBank/DDBJ databases">
        <title>NISC comparative sequencing initiative.</title>
        <authorList>
            <person name="Antonellis A."/>
            <person name="Ayele K."/>
            <person name="Benjamin B."/>
            <person name="Blakesley R.W."/>
            <person name="Boakye A."/>
            <person name="Bouffard G.G."/>
            <person name="Brinkley C."/>
            <person name="Brooks S."/>
            <person name="Chu G."/>
            <person name="Coleman H."/>
            <person name="Engle J."/>
            <person name="Gestole M."/>
            <person name="Greene A."/>
            <person name="Guan X."/>
            <person name="Gupta J."/>
            <person name="Haghighi P."/>
            <person name="Han J."/>
            <person name="Hansen N."/>
            <person name="Ho S.-L."/>
            <person name="Hu P."/>
            <person name="Hunter G."/>
            <person name="Hurle B."/>
            <person name="Idol J.R."/>
            <person name="Kwong P."/>
            <person name="Laric P."/>
            <person name="Larson S."/>
            <person name="Lee-Lin S.-Q."/>
            <person name="Legaspi R."/>
            <person name="Madden M."/>
            <person name="Maduro Q.L."/>
            <person name="Maduro V.B."/>
            <person name="Margulies E.H."/>
            <person name="Masiello C."/>
            <person name="Maskeri B."/>
            <person name="McDowell J."/>
            <person name="Mojidi H.A."/>
            <person name="Mullikin J.C."/>
            <person name="Oestreicher J.S."/>
            <person name="Park M."/>
            <person name="Portnoy M.E."/>
            <person name="Prasad A."/>
            <person name="Puri O."/>
            <person name="Reddix-Dugue N."/>
            <person name="Schandler K."/>
            <person name="Schueler M.G."/>
            <person name="Sison C."/>
            <person name="Stantripop S."/>
            <person name="Stephen E."/>
            <person name="Taye A."/>
            <person name="Thomas J.W."/>
            <person name="Thomas P.J."/>
            <person name="Tsipouri V."/>
            <person name="Ung L."/>
            <person name="Vogt J.L."/>
            <person name="Wetherby K.D."/>
            <person name="Young A."/>
            <person name="Green E.D."/>
        </authorList>
    </citation>
    <scope>NUCLEOTIDE SEQUENCE [LARGE SCALE GENOMIC DNA]</scope>
</reference>
<sequence length="178" mass="20627">MSGGKYVDSEGHLYTVPIREQGNIYKPNNKAMAEEINEKQVYDAHTKEIDLVNRDPKHLNDDVVKIDFEDVIAEPEGTHSFDGIWKASFTTFTVTKYWFYRLLSALFGIPMALIWGIYFAILSFLHIWAVVPCIKSFLIEIQCISRVYSIYVHTFCDPFFEAVGKIFSNIRINMQKEI</sequence>
<organism>
    <name type="scientific">Neofelis nebulosa</name>
    <name type="common">Clouded leopard</name>
    <dbReference type="NCBI Taxonomy" id="61452"/>
    <lineage>
        <taxon>Eukaryota</taxon>
        <taxon>Metazoa</taxon>
        <taxon>Chordata</taxon>
        <taxon>Craniata</taxon>
        <taxon>Vertebrata</taxon>
        <taxon>Euteleostomi</taxon>
        <taxon>Mammalia</taxon>
        <taxon>Eutheria</taxon>
        <taxon>Laurasiatheria</taxon>
        <taxon>Carnivora</taxon>
        <taxon>Feliformia</taxon>
        <taxon>Felidae</taxon>
        <taxon>Pantherinae</taxon>
        <taxon>Neofelis</taxon>
    </lineage>
</organism>